<protein>
    <recommendedName>
        <fullName>Diacylglycerol kinase</fullName>
        <shortName>DAG kinase</shortName>
        <shortName>DAGK</shortName>
        <ecNumber evidence="1">2.7.1.107</ecNumber>
    </recommendedName>
</protein>
<proteinExistence type="inferred from homology"/>
<sequence length="315" mass="34887">MRKRARIIYNPTSGKELFKRELPDALIKLEKAGYETSAYATEKIGDATLEAERAMHENYDVLIAAGGDGTLNEVVNGIAEKPNRPKLGVIPMGTVNDFGRALHIPNDIMGALDVIIEGHSTKVDIGKMNNRYFINLAAGGQLTQVSYETPSKLKSIVGPFAYYIKGFEMLPQMKAVDLRIEYDGNVFQGEALLFFLGLTNSMAGFEKLVPDAKLDDGYFTLIIVEKSNLAELGHIMTLASRGEHTKHPKVIYEKAKAINISSFTDLQLNVDGEYGGKLPANFLNLERHIDVFAPNDIVNEELINNDHVDDNLIEE</sequence>
<name>DAGK_STAA2</name>
<reference key="1">
    <citation type="submission" date="2007-06" db="EMBL/GenBank/DDBJ databases">
        <title>Complete sequence of chromosome of Staphylococcus aureus subsp. aureus JH1.</title>
        <authorList>
            <consortium name="US DOE Joint Genome Institute"/>
            <person name="Copeland A."/>
            <person name="Lucas S."/>
            <person name="Lapidus A."/>
            <person name="Barry K."/>
            <person name="Detter J.C."/>
            <person name="Glavina del Rio T."/>
            <person name="Hammon N."/>
            <person name="Israni S."/>
            <person name="Dalin E."/>
            <person name="Tice H."/>
            <person name="Pitluck S."/>
            <person name="Chain P."/>
            <person name="Malfatti S."/>
            <person name="Shin M."/>
            <person name="Vergez L."/>
            <person name="Schmutz J."/>
            <person name="Larimer F."/>
            <person name="Land M."/>
            <person name="Hauser L."/>
            <person name="Kyrpides N."/>
            <person name="Ivanova N."/>
            <person name="Tomasz A."/>
            <person name="Richardson P."/>
        </authorList>
    </citation>
    <scope>NUCLEOTIDE SEQUENCE [LARGE SCALE GENOMIC DNA]</scope>
    <source>
        <strain>JH1</strain>
    </source>
</reference>
<accession>A6U302</accession>
<feature type="chain" id="PRO_0000386486" description="Diacylglycerol kinase">
    <location>
        <begin position="1"/>
        <end position="315"/>
    </location>
</feature>
<feature type="domain" description="DAGKc" evidence="2">
    <location>
        <begin position="1"/>
        <end position="132"/>
    </location>
</feature>
<feature type="active site" description="Proton acceptor" evidence="1">
    <location>
        <position position="273"/>
    </location>
</feature>
<feature type="binding site" evidence="2">
    <location>
        <begin position="10"/>
        <end position="14"/>
    </location>
    <ligand>
        <name>ATP</name>
        <dbReference type="ChEBI" id="CHEBI:30616"/>
    </ligand>
</feature>
<feature type="binding site" evidence="2">
    <location>
        <position position="41"/>
    </location>
    <ligand>
        <name>ATP</name>
        <dbReference type="ChEBI" id="CHEBI:30616"/>
    </ligand>
</feature>
<feature type="binding site" evidence="2">
    <location>
        <begin position="67"/>
        <end position="73"/>
    </location>
    <ligand>
        <name>ATP</name>
        <dbReference type="ChEBI" id="CHEBI:30616"/>
    </ligand>
</feature>
<feature type="binding site" evidence="2">
    <location>
        <position position="94"/>
    </location>
    <ligand>
        <name>ATP</name>
        <dbReference type="ChEBI" id="CHEBI:30616"/>
    </ligand>
</feature>
<feature type="binding site" evidence="1">
    <location>
        <position position="213"/>
    </location>
    <ligand>
        <name>Mg(2+)</name>
        <dbReference type="ChEBI" id="CHEBI:18420"/>
    </ligand>
</feature>
<feature type="binding site" evidence="1">
    <location>
        <position position="216"/>
    </location>
    <ligand>
        <name>Mg(2+)</name>
        <dbReference type="ChEBI" id="CHEBI:18420"/>
    </ligand>
</feature>
<feature type="binding site" evidence="1">
    <location>
        <position position="218"/>
    </location>
    <ligand>
        <name>Mg(2+)</name>
        <dbReference type="ChEBI" id="CHEBI:18420"/>
    </ligand>
</feature>
<comment type="function">
    <text evidence="1">Catalyzes the phosphorylation of diacylglycerol (DAG) into phosphatidic acid. Is a key enzyme involved in the production of lipoteichoic acid by reintroducing DAG formed from the breakdown of membrane phospholipids into the phosphatidylglycerol biosynthetic pathway.</text>
</comment>
<comment type="catalytic activity">
    <reaction evidence="1">
        <text>a 1,2-diacyl-sn-glycerol + ATP = a 1,2-diacyl-sn-glycero-3-phosphate + ADP + H(+)</text>
        <dbReference type="Rhea" id="RHEA:10272"/>
        <dbReference type="ChEBI" id="CHEBI:15378"/>
        <dbReference type="ChEBI" id="CHEBI:17815"/>
        <dbReference type="ChEBI" id="CHEBI:30616"/>
        <dbReference type="ChEBI" id="CHEBI:58608"/>
        <dbReference type="ChEBI" id="CHEBI:456216"/>
        <dbReference type="EC" id="2.7.1.107"/>
    </reaction>
</comment>
<comment type="cofactor">
    <cofactor evidence="1">
        <name>Mg(2+)</name>
        <dbReference type="ChEBI" id="CHEBI:18420"/>
    </cofactor>
    <text evidence="1">Binds 1 Mg(2+) ion per subunit. This ion appears to have a structural role and is required for catalytic activity.</text>
</comment>
<comment type="subunit">
    <text evidence="1">Homodimer.</text>
</comment>
<comment type="similarity">
    <text evidence="3">Belongs to the diacylglycerol/lipid kinase family.</text>
</comment>
<dbReference type="EC" id="2.7.1.107" evidence="1"/>
<dbReference type="EMBL" id="CP000736">
    <property type="protein sequence ID" value="ABR52820.1"/>
    <property type="molecule type" value="Genomic_DNA"/>
</dbReference>
<dbReference type="SMR" id="A6U302"/>
<dbReference type="KEGG" id="sah:SaurJH1_1986"/>
<dbReference type="HOGENOM" id="CLU_045532_1_0_9"/>
<dbReference type="GO" id="GO:0005886">
    <property type="term" value="C:plasma membrane"/>
    <property type="evidence" value="ECO:0007669"/>
    <property type="project" value="TreeGrafter"/>
</dbReference>
<dbReference type="GO" id="GO:0005524">
    <property type="term" value="F:ATP binding"/>
    <property type="evidence" value="ECO:0007669"/>
    <property type="project" value="UniProtKB-KW"/>
</dbReference>
<dbReference type="GO" id="GO:0004143">
    <property type="term" value="F:ATP-dependent diacylglycerol kinase activity"/>
    <property type="evidence" value="ECO:0007669"/>
    <property type="project" value="UniProtKB-EC"/>
</dbReference>
<dbReference type="GO" id="GO:0046872">
    <property type="term" value="F:metal ion binding"/>
    <property type="evidence" value="ECO:0007669"/>
    <property type="project" value="UniProtKB-KW"/>
</dbReference>
<dbReference type="GO" id="GO:0008654">
    <property type="term" value="P:phospholipid biosynthetic process"/>
    <property type="evidence" value="ECO:0007669"/>
    <property type="project" value="UniProtKB-KW"/>
</dbReference>
<dbReference type="FunFam" id="2.60.200.40:FF:000015">
    <property type="entry name" value="Diacylglycerol kinase"/>
    <property type="match status" value="1"/>
</dbReference>
<dbReference type="FunFam" id="3.40.50.10330:FF:000008">
    <property type="entry name" value="Probable lipid kinase YegS"/>
    <property type="match status" value="1"/>
</dbReference>
<dbReference type="Gene3D" id="2.60.200.40">
    <property type="match status" value="1"/>
</dbReference>
<dbReference type="Gene3D" id="3.40.50.10330">
    <property type="entry name" value="Probable inorganic polyphosphate/atp-NAD kinase, domain 1"/>
    <property type="match status" value="1"/>
</dbReference>
<dbReference type="InterPro" id="IPR017438">
    <property type="entry name" value="ATP-NAD_kinase_N"/>
</dbReference>
<dbReference type="InterPro" id="IPR005218">
    <property type="entry name" value="Diacylglycerol/lipid_kinase"/>
</dbReference>
<dbReference type="InterPro" id="IPR001206">
    <property type="entry name" value="Diacylglycerol_kinase_cat_dom"/>
</dbReference>
<dbReference type="InterPro" id="IPR050187">
    <property type="entry name" value="Lipid_Phosphate_FormReg"/>
</dbReference>
<dbReference type="InterPro" id="IPR016064">
    <property type="entry name" value="NAD/diacylglycerol_kinase_sf"/>
</dbReference>
<dbReference type="InterPro" id="IPR045540">
    <property type="entry name" value="YegS/DAGK_C"/>
</dbReference>
<dbReference type="NCBIfam" id="NF009603">
    <property type="entry name" value="PRK13055.1"/>
    <property type="match status" value="1"/>
</dbReference>
<dbReference type="NCBIfam" id="NF009874">
    <property type="entry name" value="PRK13337.1"/>
    <property type="match status" value="1"/>
</dbReference>
<dbReference type="NCBIfam" id="TIGR00147">
    <property type="entry name" value="YegS/Rv2252/BmrU family lipid kinase"/>
    <property type="match status" value="1"/>
</dbReference>
<dbReference type="PANTHER" id="PTHR12358:SF106">
    <property type="entry name" value="LIPID KINASE YEGS"/>
    <property type="match status" value="1"/>
</dbReference>
<dbReference type="PANTHER" id="PTHR12358">
    <property type="entry name" value="SPHINGOSINE KINASE"/>
    <property type="match status" value="1"/>
</dbReference>
<dbReference type="Pfam" id="PF00781">
    <property type="entry name" value="DAGK_cat"/>
    <property type="match status" value="1"/>
</dbReference>
<dbReference type="Pfam" id="PF19279">
    <property type="entry name" value="YegS_C"/>
    <property type="match status" value="1"/>
</dbReference>
<dbReference type="SMART" id="SM00046">
    <property type="entry name" value="DAGKc"/>
    <property type="match status" value="1"/>
</dbReference>
<dbReference type="SUPFAM" id="SSF111331">
    <property type="entry name" value="NAD kinase/diacylglycerol kinase-like"/>
    <property type="match status" value="1"/>
</dbReference>
<dbReference type="PROSITE" id="PS50146">
    <property type="entry name" value="DAGK"/>
    <property type="match status" value="1"/>
</dbReference>
<gene>
    <name type="primary">dagK</name>
    <name type="ordered locus">SaurJH1_1986</name>
</gene>
<evidence type="ECO:0000250" key="1">
    <source>
        <dbReference type="UniProtKB" id="Q6GFF9"/>
    </source>
</evidence>
<evidence type="ECO:0000255" key="2">
    <source>
        <dbReference type="PROSITE-ProRule" id="PRU00783"/>
    </source>
</evidence>
<evidence type="ECO:0000305" key="3"/>
<organism>
    <name type="scientific">Staphylococcus aureus (strain JH1)</name>
    <dbReference type="NCBI Taxonomy" id="359787"/>
    <lineage>
        <taxon>Bacteria</taxon>
        <taxon>Bacillati</taxon>
        <taxon>Bacillota</taxon>
        <taxon>Bacilli</taxon>
        <taxon>Bacillales</taxon>
        <taxon>Staphylococcaceae</taxon>
        <taxon>Staphylococcus</taxon>
    </lineage>
</organism>
<keyword id="KW-0067">ATP-binding</keyword>
<keyword id="KW-0418">Kinase</keyword>
<keyword id="KW-0444">Lipid biosynthesis</keyword>
<keyword id="KW-0443">Lipid metabolism</keyword>
<keyword id="KW-0460">Magnesium</keyword>
<keyword id="KW-0479">Metal-binding</keyword>
<keyword id="KW-0547">Nucleotide-binding</keyword>
<keyword id="KW-0594">Phospholipid biosynthesis</keyword>
<keyword id="KW-1208">Phospholipid metabolism</keyword>
<keyword id="KW-0808">Transferase</keyword>